<reference key="1">
    <citation type="journal article" date="2002" name="Lancet">
        <title>Genome and virulence determinants of high virulence community-acquired MRSA.</title>
        <authorList>
            <person name="Baba T."/>
            <person name="Takeuchi F."/>
            <person name="Kuroda M."/>
            <person name="Yuzawa H."/>
            <person name="Aoki K."/>
            <person name="Oguchi A."/>
            <person name="Nagai Y."/>
            <person name="Iwama N."/>
            <person name="Asano K."/>
            <person name="Naimi T."/>
            <person name="Kuroda H."/>
            <person name="Cui L."/>
            <person name="Yamamoto K."/>
            <person name="Hiramatsu K."/>
        </authorList>
    </citation>
    <scope>NUCLEOTIDE SEQUENCE [LARGE SCALE GENOMIC DNA]</scope>
    <source>
        <strain>MW2</strain>
    </source>
</reference>
<reference key="2">
    <citation type="journal article" date="2013" name="Antimicrob. Agents Chemother.">
        <title>Discovery of inhibitors of 4'-phosphopantetheine adenylyltransferase (PPAT) to validate PPAT as a target for antibacterial therapy.</title>
        <authorList>
            <person name="de Jonge B.L."/>
            <person name="Walkup G.K."/>
            <person name="Lahiri S.D."/>
            <person name="Huynh H."/>
            <person name="Neckermann G."/>
            <person name="Utley L."/>
            <person name="Nash T.J."/>
            <person name="Brock J."/>
            <person name="San Martin M."/>
            <person name="Kutschke A."/>
            <person name="Johnstone M."/>
            <person name="Laganas V."/>
            <person name="Hajec L."/>
            <person name="Gu R.F."/>
            <person name="Ni H."/>
            <person name="Chen B."/>
            <person name="Hutchings K."/>
            <person name="Holt E."/>
            <person name="McKinney D."/>
            <person name="Gao N."/>
            <person name="Livchak S."/>
            <person name="Thresher J."/>
        </authorList>
    </citation>
    <scope>X-RAY CRYSTALLOGRAPHY (1.72 ANGSTROMS) IN COMPLEXES WITH SEVERAL CYCLOALKYL PYRIMIDINE INHIBITORS; ADP AND ATP ANALOG</scope>
    <scope>FUNCTION</scope>
    <scope>CATALYTIC ACTIVITY</scope>
    <scope>ACTIVITY REGULATION</scope>
    <scope>BIOTECHNOLOGY</scope>
    <scope>SUBUNIT</scope>
</reference>
<gene>
    <name evidence="1 3" type="primary">coaD</name>
    <name type="ordered locus">MW1007</name>
</gene>
<dbReference type="EC" id="2.7.7.3" evidence="1 2"/>
<dbReference type="EMBL" id="BA000033">
    <property type="protein sequence ID" value="BAB94872.1"/>
    <property type="molecule type" value="Genomic_DNA"/>
</dbReference>
<dbReference type="RefSeq" id="WP_000401377.1">
    <property type="nucleotide sequence ID" value="NC_003923.1"/>
</dbReference>
<dbReference type="PDB" id="4NAH">
    <property type="method" value="X-ray"/>
    <property type="resolution" value="2.38 A"/>
    <property type="chains" value="A/B/C/D/E/F=1-160"/>
</dbReference>
<dbReference type="PDB" id="4NAT">
    <property type="method" value="X-ray"/>
    <property type="resolution" value="1.72 A"/>
    <property type="chains" value="A/B/C=1-160"/>
</dbReference>
<dbReference type="PDB" id="4NAU">
    <property type="method" value="X-ray"/>
    <property type="resolution" value="2.33 A"/>
    <property type="chains" value="A/B/C=1-160"/>
</dbReference>
<dbReference type="PDBsum" id="4NAH"/>
<dbReference type="PDBsum" id="4NAT"/>
<dbReference type="PDBsum" id="4NAU"/>
<dbReference type="SMR" id="P63820"/>
<dbReference type="GeneID" id="98345441"/>
<dbReference type="KEGG" id="sam:MW1007"/>
<dbReference type="HOGENOM" id="CLU_100149_0_1_9"/>
<dbReference type="UniPathway" id="UPA00241">
    <property type="reaction ID" value="UER00355"/>
</dbReference>
<dbReference type="EvolutionaryTrace" id="P63820"/>
<dbReference type="GO" id="GO:0005737">
    <property type="term" value="C:cytoplasm"/>
    <property type="evidence" value="ECO:0007669"/>
    <property type="project" value="UniProtKB-SubCell"/>
</dbReference>
<dbReference type="GO" id="GO:0005524">
    <property type="term" value="F:ATP binding"/>
    <property type="evidence" value="ECO:0007669"/>
    <property type="project" value="UniProtKB-KW"/>
</dbReference>
<dbReference type="GO" id="GO:0004595">
    <property type="term" value="F:pantetheine-phosphate adenylyltransferase activity"/>
    <property type="evidence" value="ECO:0007669"/>
    <property type="project" value="UniProtKB-UniRule"/>
</dbReference>
<dbReference type="GO" id="GO:0015937">
    <property type="term" value="P:coenzyme A biosynthetic process"/>
    <property type="evidence" value="ECO:0007669"/>
    <property type="project" value="UniProtKB-UniRule"/>
</dbReference>
<dbReference type="CDD" id="cd02163">
    <property type="entry name" value="PPAT"/>
    <property type="match status" value="1"/>
</dbReference>
<dbReference type="Gene3D" id="3.40.50.620">
    <property type="entry name" value="HUPs"/>
    <property type="match status" value="1"/>
</dbReference>
<dbReference type="HAMAP" id="MF_00151">
    <property type="entry name" value="PPAT_bact"/>
    <property type="match status" value="1"/>
</dbReference>
<dbReference type="InterPro" id="IPR004821">
    <property type="entry name" value="Cyt_trans-like"/>
</dbReference>
<dbReference type="InterPro" id="IPR001980">
    <property type="entry name" value="PPAT"/>
</dbReference>
<dbReference type="InterPro" id="IPR014729">
    <property type="entry name" value="Rossmann-like_a/b/a_fold"/>
</dbReference>
<dbReference type="NCBIfam" id="TIGR01510">
    <property type="entry name" value="coaD_prev_kdtB"/>
    <property type="match status" value="1"/>
</dbReference>
<dbReference type="NCBIfam" id="TIGR00125">
    <property type="entry name" value="cyt_tran_rel"/>
    <property type="match status" value="1"/>
</dbReference>
<dbReference type="PANTHER" id="PTHR21342">
    <property type="entry name" value="PHOSPHOPANTETHEINE ADENYLYLTRANSFERASE"/>
    <property type="match status" value="1"/>
</dbReference>
<dbReference type="PANTHER" id="PTHR21342:SF1">
    <property type="entry name" value="PHOSPHOPANTETHEINE ADENYLYLTRANSFERASE"/>
    <property type="match status" value="1"/>
</dbReference>
<dbReference type="Pfam" id="PF01467">
    <property type="entry name" value="CTP_transf_like"/>
    <property type="match status" value="1"/>
</dbReference>
<dbReference type="PRINTS" id="PR01020">
    <property type="entry name" value="LPSBIOSNTHSS"/>
</dbReference>
<dbReference type="SUPFAM" id="SSF52374">
    <property type="entry name" value="Nucleotidylyl transferase"/>
    <property type="match status" value="1"/>
</dbReference>
<keyword id="KW-0002">3D-structure</keyword>
<keyword id="KW-0067">ATP-binding</keyword>
<keyword id="KW-0173">Coenzyme A biosynthesis</keyword>
<keyword id="KW-0963">Cytoplasm</keyword>
<keyword id="KW-0460">Magnesium</keyword>
<keyword id="KW-0547">Nucleotide-binding</keyword>
<keyword id="KW-0548">Nucleotidyltransferase</keyword>
<keyword id="KW-0808">Transferase</keyword>
<organism>
    <name type="scientific">Staphylococcus aureus (strain MW2)</name>
    <dbReference type="NCBI Taxonomy" id="196620"/>
    <lineage>
        <taxon>Bacteria</taxon>
        <taxon>Bacillati</taxon>
        <taxon>Bacillota</taxon>
        <taxon>Bacilli</taxon>
        <taxon>Bacillales</taxon>
        <taxon>Staphylococcaceae</taxon>
        <taxon>Staphylococcus</taxon>
    </lineage>
</organism>
<sequence>MEHTIAVIPGSFDPITYGHLDIIERSTDRFDEIHVCVLKNSKKEGTFSLEERMDLIEQSVKHLPNVKVHQFSGLLVDYCEQVGAKTIIRGLRAVSDFEYELRLTSMNKKLNNEIETLYMMSSTNYSFISSSIVKEVAAYRADISEFVPPYVEKALKKKFK</sequence>
<protein>
    <recommendedName>
        <fullName evidence="1 3">Phosphopantetheine adenylyltransferase</fullName>
        <ecNumber evidence="1 2">2.7.7.3</ecNumber>
    </recommendedName>
    <alternativeName>
        <fullName evidence="1">Dephospho-CoA pyrophosphorylase</fullName>
    </alternativeName>
    <alternativeName>
        <fullName evidence="1">Pantetheine-phosphate adenylyltransferase</fullName>
        <shortName evidence="1 3">PPAT</shortName>
    </alternativeName>
</protein>
<evidence type="ECO:0000255" key="1">
    <source>
        <dbReference type="HAMAP-Rule" id="MF_00151"/>
    </source>
</evidence>
<evidence type="ECO:0000269" key="2">
    <source>
    </source>
</evidence>
<evidence type="ECO:0000303" key="3">
    <source>
    </source>
</evidence>
<evidence type="ECO:0000305" key="4">
    <source>
    </source>
</evidence>
<evidence type="ECO:0007744" key="5">
    <source>
        <dbReference type="PDB" id="4NAH"/>
    </source>
</evidence>
<evidence type="ECO:0007744" key="6">
    <source>
        <dbReference type="PDB" id="4NAT"/>
    </source>
</evidence>
<evidence type="ECO:0007744" key="7">
    <source>
        <dbReference type="PDB" id="4NAU"/>
    </source>
</evidence>
<evidence type="ECO:0007829" key="8">
    <source>
        <dbReference type="PDB" id="4NAT"/>
    </source>
</evidence>
<name>COAD_STAAW</name>
<proteinExistence type="evidence at protein level"/>
<accession>P63820</accession>
<accession>Q99UX9</accession>
<feature type="chain" id="PRO_0000156276" description="Phosphopantetheine adenylyltransferase">
    <location>
        <begin position="1"/>
        <end position="160"/>
    </location>
</feature>
<feature type="binding site" evidence="1 4 6 7">
    <location>
        <begin position="11"/>
        <end position="12"/>
    </location>
    <ligand>
        <name>ATP</name>
        <dbReference type="ChEBI" id="CHEBI:30616"/>
    </ligand>
</feature>
<feature type="binding site" evidence="1">
    <location>
        <position position="11"/>
    </location>
    <ligand>
        <name>substrate</name>
    </ligand>
</feature>
<feature type="binding site" evidence="1 4 7">
    <location>
        <position position="19"/>
    </location>
    <ligand>
        <name>ATP</name>
        <dbReference type="ChEBI" id="CHEBI:30616"/>
    </ligand>
</feature>
<feature type="binding site" evidence="1">
    <location>
        <position position="43"/>
    </location>
    <ligand>
        <name>substrate</name>
    </ligand>
</feature>
<feature type="binding site" evidence="1">
    <location>
        <position position="75"/>
    </location>
    <ligand>
        <name>substrate</name>
    </ligand>
</feature>
<feature type="binding site" evidence="1">
    <location>
        <position position="89"/>
    </location>
    <ligand>
        <name>substrate</name>
    </ligand>
</feature>
<feature type="binding site" evidence="1 4 6 7">
    <location>
        <begin position="90"/>
        <end position="92"/>
    </location>
    <ligand>
        <name>ATP</name>
        <dbReference type="ChEBI" id="CHEBI:30616"/>
    </ligand>
</feature>
<feature type="binding site" evidence="1 4 5">
    <location>
        <position position="100"/>
    </location>
    <ligand>
        <name>ATP</name>
        <dbReference type="ChEBI" id="CHEBI:30616"/>
    </ligand>
</feature>
<feature type="binding site" evidence="4 5 7">
    <location>
        <position position="121"/>
    </location>
    <ligand>
        <name>ATP</name>
        <dbReference type="ChEBI" id="CHEBI:30616"/>
    </ligand>
</feature>
<feature type="binding site" evidence="1 4 7">
    <location>
        <begin position="125"/>
        <end position="131"/>
    </location>
    <ligand>
        <name>ATP</name>
        <dbReference type="ChEBI" id="CHEBI:30616"/>
    </ligand>
</feature>
<feature type="strand" evidence="8">
    <location>
        <begin position="5"/>
        <end position="10"/>
    </location>
</feature>
<feature type="helix" evidence="8">
    <location>
        <begin position="17"/>
        <end position="26"/>
    </location>
</feature>
<feature type="helix" evidence="8">
    <location>
        <begin position="27"/>
        <end position="29"/>
    </location>
</feature>
<feature type="strand" evidence="8">
    <location>
        <begin position="30"/>
        <end position="37"/>
    </location>
</feature>
<feature type="helix" evidence="8">
    <location>
        <begin position="49"/>
        <end position="59"/>
    </location>
</feature>
<feature type="turn" evidence="8">
    <location>
        <begin position="60"/>
        <end position="62"/>
    </location>
</feature>
<feature type="strand" evidence="8">
    <location>
        <begin position="66"/>
        <end position="70"/>
    </location>
</feature>
<feature type="helix" evidence="8">
    <location>
        <begin position="75"/>
        <end position="82"/>
    </location>
</feature>
<feature type="strand" evidence="8">
    <location>
        <begin position="86"/>
        <end position="91"/>
    </location>
</feature>
<feature type="helix" evidence="8">
    <location>
        <begin position="94"/>
        <end position="110"/>
    </location>
</feature>
<feature type="strand" evidence="8">
    <location>
        <begin position="115"/>
        <end position="120"/>
    </location>
</feature>
<feature type="helix" evidence="8">
    <location>
        <begin position="123"/>
        <end position="125"/>
    </location>
</feature>
<feature type="helix" evidence="8">
    <location>
        <begin position="130"/>
        <end position="138"/>
    </location>
</feature>
<feature type="turn" evidence="8">
    <location>
        <begin position="144"/>
        <end position="146"/>
    </location>
</feature>
<feature type="helix" evidence="8">
    <location>
        <begin position="149"/>
        <end position="159"/>
    </location>
</feature>
<comment type="function">
    <text evidence="1 2">Reversibly transfers an adenylyl group from ATP to 4'-phosphopantetheine, yielding dephospho-CoA (dPCoA) and pyrophosphate.</text>
</comment>
<comment type="catalytic activity">
    <reaction evidence="1 2">
        <text>(R)-4'-phosphopantetheine + ATP + H(+) = 3'-dephospho-CoA + diphosphate</text>
        <dbReference type="Rhea" id="RHEA:19801"/>
        <dbReference type="ChEBI" id="CHEBI:15378"/>
        <dbReference type="ChEBI" id="CHEBI:30616"/>
        <dbReference type="ChEBI" id="CHEBI:33019"/>
        <dbReference type="ChEBI" id="CHEBI:57328"/>
        <dbReference type="ChEBI" id="CHEBI:61723"/>
        <dbReference type="EC" id="2.7.7.3"/>
    </reaction>
</comment>
<comment type="cofactor">
    <cofactor evidence="1">
        <name>Mg(2+)</name>
        <dbReference type="ChEBI" id="CHEBI:18420"/>
    </cofactor>
</comment>
<comment type="activity regulation">
    <text evidence="2">Is inhibited by a series of cycloalkyl pyrimidines, which also show suppression of bacterial growth.</text>
</comment>
<comment type="pathway">
    <text evidence="1">Cofactor biosynthesis; coenzyme A biosynthesis; CoA from (R)-pantothenate: step 4/5.</text>
</comment>
<comment type="subunit">
    <text evidence="1 4">Homohexamer.</text>
</comment>
<comment type="subcellular location">
    <subcellularLocation>
        <location evidence="1">Cytoplasm</location>
    </subcellularLocation>
</comment>
<comment type="biotechnology">
    <text evidence="2">PPAT is a validated novel target for antibacterial therapy against Gram-positive bacteria.</text>
</comment>
<comment type="similarity">
    <text evidence="1">Belongs to the bacterial CoaD family.</text>
</comment>